<protein>
    <recommendedName>
        <fullName evidence="1">Probable cytosol aminopeptidase</fullName>
        <ecNumber evidence="1">3.4.11.1</ecNumber>
    </recommendedName>
    <alternativeName>
        <fullName evidence="1">Leucine aminopeptidase</fullName>
        <shortName evidence="1">LAP</shortName>
        <ecNumber evidence="1">3.4.11.10</ecNumber>
    </alternativeName>
    <alternativeName>
        <fullName evidence="1">Leucyl aminopeptidase</fullName>
    </alternativeName>
</protein>
<proteinExistence type="inferred from homology"/>
<feature type="chain" id="PRO_1000098365" description="Probable cytosol aminopeptidase">
    <location>
        <begin position="1"/>
        <end position="503"/>
    </location>
</feature>
<feature type="active site" evidence="1">
    <location>
        <position position="282"/>
    </location>
</feature>
<feature type="active site" evidence="1">
    <location>
        <position position="356"/>
    </location>
</feature>
<feature type="binding site" evidence="1">
    <location>
        <position position="270"/>
    </location>
    <ligand>
        <name>Mn(2+)</name>
        <dbReference type="ChEBI" id="CHEBI:29035"/>
        <label>2</label>
    </ligand>
</feature>
<feature type="binding site" evidence="1">
    <location>
        <position position="275"/>
    </location>
    <ligand>
        <name>Mn(2+)</name>
        <dbReference type="ChEBI" id="CHEBI:29035"/>
        <label>1</label>
    </ligand>
</feature>
<feature type="binding site" evidence="1">
    <location>
        <position position="275"/>
    </location>
    <ligand>
        <name>Mn(2+)</name>
        <dbReference type="ChEBI" id="CHEBI:29035"/>
        <label>2</label>
    </ligand>
</feature>
<feature type="binding site" evidence="1">
    <location>
        <position position="293"/>
    </location>
    <ligand>
        <name>Mn(2+)</name>
        <dbReference type="ChEBI" id="CHEBI:29035"/>
        <label>2</label>
    </ligand>
</feature>
<feature type="binding site" evidence="1">
    <location>
        <position position="352"/>
    </location>
    <ligand>
        <name>Mn(2+)</name>
        <dbReference type="ChEBI" id="CHEBI:29035"/>
        <label>1</label>
    </ligand>
</feature>
<feature type="binding site" evidence="1">
    <location>
        <position position="354"/>
    </location>
    <ligand>
        <name>Mn(2+)</name>
        <dbReference type="ChEBI" id="CHEBI:29035"/>
        <label>1</label>
    </ligand>
</feature>
<feature type="binding site" evidence="1">
    <location>
        <position position="354"/>
    </location>
    <ligand>
        <name>Mn(2+)</name>
        <dbReference type="ChEBI" id="CHEBI:29035"/>
        <label>2</label>
    </ligand>
</feature>
<sequence length="503" mass="54797">MEFSVKSGSPEKQRSACIVVGVFEPRRLSPIAEQLDKISDGYISALLRRGELEGKVGQTLLLHHVPNILSERILLIGCGKERELDERQYKQVIQKTINTLNDTGSMEAVCFLTELHVKGRNTYWKVRQAVETAKETLYTFDQLKSNKTEPRRPLRKMVFNVPTRRELTSGERAIQHGLAIASGIKAAKDLGNMPPNICNAAYLASQARQLADAFSTNTVTRVIGEQQMKELGMHAYLAVGHGSQNESLMSVIEYKGNPNKDAKPIVLVGKGLTFDSGGISIKPAEGMDEMKYDMCGAATVYGVMRVVAELQLPLNVVGVLAGCENMPGGRAYRPGDILTTMSGQTVEVLNTDAEGRLVLCDALTYVERFEPELVIDIATLTGACVVALGNHLTGLMSNHNPLAHELIGASEQAGDRAWRLPLGEEYYEQLDSNFADMANIGGRAGGAITAGCFLSRFTRKYSWAHLDIAGTAWRSGKNKGATGRPVALLSQFLLNRAGLNGDD</sequence>
<organism>
    <name type="scientific">Yersinia pestis bv. Antiqua (strain Angola)</name>
    <dbReference type="NCBI Taxonomy" id="349746"/>
    <lineage>
        <taxon>Bacteria</taxon>
        <taxon>Pseudomonadati</taxon>
        <taxon>Pseudomonadota</taxon>
        <taxon>Gammaproteobacteria</taxon>
        <taxon>Enterobacterales</taxon>
        <taxon>Yersiniaceae</taxon>
        <taxon>Yersinia</taxon>
    </lineage>
</organism>
<dbReference type="EC" id="3.4.11.1" evidence="1"/>
<dbReference type="EC" id="3.4.11.10" evidence="1"/>
<dbReference type="EMBL" id="CP000901">
    <property type="protein sequence ID" value="ABX85321.1"/>
    <property type="molecule type" value="Genomic_DNA"/>
</dbReference>
<dbReference type="RefSeq" id="WP_002209310.1">
    <property type="nucleotide sequence ID" value="NZ_CP009935.1"/>
</dbReference>
<dbReference type="SMR" id="A9R5F5"/>
<dbReference type="MEROPS" id="M17.003"/>
<dbReference type="GeneID" id="57975268"/>
<dbReference type="KEGG" id="ypg:YpAngola_A4047"/>
<dbReference type="PATRIC" id="fig|349746.12.peg.774"/>
<dbReference type="GO" id="GO:0005737">
    <property type="term" value="C:cytoplasm"/>
    <property type="evidence" value="ECO:0007669"/>
    <property type="project" value="UniProtKB-SubCell"/>
</dbReference>
<dbReference type="GO" id="GO:0030145">
    <property type="term" value="F:manganese ion binding"/>
    <property type="evidence" value="ECO:0007669"/>
    <property type="project" value="UniProtKB-UniRule"/>
</dbReference>
<dbReference type="GO" id="GO:0070006">
    <property type="term" value="F:metalloaminopeptidase activity"/>
    <property type="evidence" value="ECO:0007669"/>
    <property type="project" value="InterPro"/>
</dbReference>
<dbReference type="GO" id="GO:0006508">
    <property type="term" value="P:proteolysis"/>
    <property type="evidence" value="ECO:0007669"/>
    <property type="project" value="UniProtKB-KW"/>
</dbReference>
<dbReference type="CDD" id="cd00433">
    <property type="entry name" value="Peptidase_M17"/>
    <property type="match status" value="1"/>
</dbReference>
<dbReference type="FunFam" id="3.40.220.10:FF:000001">
    <property type="entry name" value="Probable cytosol aminopeptidase"/>
    <property type="match status" value="1"/>
</dbReference>
<dbReference type="FunFam" id="3.40.630.10:FF:000004">
    <property type="entry name" value="Probable cytosol aminopeptidase"/>
    <property type="match status" value="1"/>
</dbReference>
<dbReference type="Gene3D" id="3.40.220.10">
    <property type="entry name" value="Leucine Aminopeptidase, subunit E, domain 1"/>
    <property type="match status" value="1"/>
</dbReference>
<dbReference type="Gene3D" id="3.40.630.10">
    <property type="entry name" value="Zn peptidases"/>
    <property type="match status" value="1"/>
</dbReference>
<dbReference type="HAMAP" id="MF_00181">
    <property type="entry name" value="Cytosol_peptidase_M17"/>
    <property type="match status" value="1"/>
</dbReference>
<dbReference type="InterPro" id="IPR011356">
    <property type="entry name" value="Leucine_aapep/pepB"/>
</dbReference>
<dbReference type="InterPro" id="IPR043472">
    <property type="entry name" value="Macro_dom-like"/>
</dbReference>
<dbReference type="InterPro" id="IPR000819">
    <property type="entry name" value="Peptidase_M17_C"/>
</dbReference>
<dbReference type="InterPro" id="IPR023042">
    <property type="entry name" value="Peptidase_M17_leu_NH2_pept"/>
</dbReference>
<dbReference type="InterPro" id="IPR008283">
    <property type="entry name" value="Peptidase_M17_N"/>
</dbReference>
<dbReference type="NCBIfam" id="NF002072">
    <property type="entry name" value="PRK00913.1-1"/>
    <property type="match status" value="1"/>
</dbReference>
<dbReference type="NCBIfam" id="NF002074">
    <property type="entry name" value="PRK00913.1-4"/>
    <property type="match status" value="1"/>
</dbReference>
<dbReference type="PANTHER" id="PTHR11963:SF23">
    <property type="entry name" value="CYTOSOL AMINOPEPTIDASE"/>
    <property type="match status" value="1"/>
</dbReference>
<dbReference type="PANTHER" id="PTHR11963">
    <property type="entry name" value="LEUCINE AMINOPEPTIDASE-RELATED"/>
    <property type="match status" value="1"/>
</dbReference>
<dbReference type="Pfam" id="PF00883">
    <property type="entry name" value="Peptidase_M17"/>
    <property type="match status" value="1"/>
</dbReference>
<dbReference type="Pfam" id="PF02789">
    <property type="entry name" value="Peptidase_M17_N"/>
    <property type="match status" value="1"/>
</dbReference>
<dbReference type="PRINTS" id="PR00481">
    <property type="entry name" value="LAMNOPPTDASE"/>
</dbReference>
<dbReference type="SUPFAM" id="SSF52949">
    <property type="entry name" value="Macro domain-like"/>
    <property type="match status" value="1"/>
</dbReference>
<dbReference type="SUPFAM" id="SSF53187">
    <property type="entry name" value="Zn-dependent exopeptidases"/>
    <property type="match status" value="1"/>
</dbReference>
<dbReference type="PROSITE" id="PS00631">
    <property type="entry name" value="CYTOSOL_AP"/>
    <property type="match status" value="1"/>
</dbReference>
<comment type="function">
    <text evidence="1">Presumably involved in the processing and regular turnover of intracellular proteins. Catalyzes the removal of unsubstituted N-terminal amino acids from various peptides.</text>
</comment>
<comment type="catalytic activity">
    <reaction evidence="1">
        <text>Release of an N-terminal amino acid, Xaa-|-Yaa-, in which Xaa is preferably Leu, but may be other amino acids including Pro although not Arg or Lys, and Yaa may be Pro. Amino acid amides and methyl esters are also readily hydrolyzed, but rates on arylamides are exceedingly low.</text>
        <dbReference type="EC" id="3.4.11.1"/>
    </reaction>
</comment>
<comment type="catalytic activity">
    <reaction evidence="1">
        <text>Release of an N-terminal amino acid, preferentially leucine, but not glutamic or aspartic acids.</text>
        <dbReference type="EC" id="3.4.11.10"/>
    </reaction>
</comment>
<comment type="cofactor">
    <cofactor evidence="1">
        <name>Mn(2+)</name>
        <dbReference type="ChEBI" id="CHEBI:29035"/>
    </cofactor>
    <text evidence="1">Binds 2 manganese ions per subunit.</text>
</comment>
<comment type="subcellular location">
    <subcellularLocation>
        <location evidence="1">Cytoplasm</location>
    </subcellularLocation>
</comment>
<comment type="similarity">
    <text evidence="1">Belongs to the peptidase M17 family.</text>
</comment>
<name>AMPA_YERPG</name>
<accession>A9R5F5</accession>
<evidence type="ECO:0000255" key="1">
    <source>
        <dbReference type="HAMAP-Rule" id="MF_00181"/>
    </source>
</evidence>
<gene>
    <name evidence="1" type="primary">pepA</name>
    <name type="ordered locus">YpAngola_A4047</name>
</gene>
<reference key="1">
    <citation type="journal article" date="2010" name="J. Bacteriol.">
        <title>Genome sequence of the deep-rooted Yersinia pestis strain Angola reveals new insights into the evolution and pangenome of the plague bacterium.</title>
        <authorList>
            <person name="Eppinger M."/>
            <person name="Worsham P.L."/>
            <person name="Nikolich M.P."/>
            <person name="Riley D.R."/>
            <person name="Sebastian Y."/>
            <person name="Mou S."/>
            <person name="Achtman M."/>
            <person name="Lindler L.E."/>
            <person name="Ravel J."/>
        </authorList>
    </citation>
    <scope>NUCLEOTIDE SEQUENCE [LARGE SCALE GENOMIC DNA]</scope>
    <source>
        <strain>Angola</strain>
    </source>
</reference>
<keyword id="KW-0031">Aminopeptidase</keyword>
<keyword id="KW-0963">Cytoplasm</keyword>
<keyword id="KW-0378">Hydrolase</keyword>
<keyword id="KW-0464">Manganese</keyword>
<keyword id="KW-0479">Metal-binding</keyword>
<keyword id="KW-0645">Protease</keyword>